<organism>
    <name type="scientific">Lachancea thermotolerans (strain ATCC 56472 / CBS 6340 / NRRL Y-8284)</name>
    <name type="common">Yeast</name>
    <name type="synonym">Kluyveromyces thermotolerans</name>
    <dbReference type="NCBI Taxonomy" id="559295"/>
    <lineage>
        <taxon>Eukaryota</taxon>
        <taxon>Fungi</taxon>
        <taxon>Dikarya</taxon>
        <taxon>Ascomycota</taxon>
        <taxon>Saccharomycotina</taxon>
        <taxon>Saccharomycetes</taxon>
        <taxon>Saccharomycetales</taxon>
        <taxon>Saccharomycetaceae</taxon>
        <taxon>Lachancea</taxon>
    </lineage>
</organism>
<sequence>MSRNFYADEGAFVGSSKGPLLPDILHTEDVSTKTLPTGNQIYDSKALDSWFSGIRKYVTHKYYIYKTELDTQKSAAANEWKSVQDYVSQHVLTDDYEKQELLVPSSALALGAFFTGRVLSNRRNWGFDSPLNTTKAGILTRNPSALGRVLTSIPSRVLLPWVLTGTVLSQLTPVTWNNSVKALEQDVLPADLVARYHEIWNQLLVDGVQKTSASVHRNVDASLQQGIGEVRRYLVKKLDL</sequence>
<dbReference type="EMBL" id="CU928168">
    <property type="protein sequence ID" value="CAR22665.1"/>
    <property type="molecule type" value="Genomic_DNA"/>
</dbReference>
<dbReference type="RefSeq" id="XP_002553103.1">
    <property type="nucleotide sequence ID" value="XM_002553057.1"/>
</dbReference>
<dbReference type="SMR" id="C5DGX3"/>
<dbReference type="FunCoup" id="C5DGX3">
    <property type="interactions" value="55"/>
</dbReference>
<dbReference type="STRING" id="559295.C5DGX3"/>
<dbReference type="GeneID" id="8295340"/>
<dbReference type="KEGG" id="lth:KLTH0D09020g"/>
<dbReference type="eggNOG" id="ENOG502S31N">
    <property type="taxonomic scope" value="Eukaryota"/>
</dbReference>
<dbReference type="HOGENOM" id="CLU_093584_0_0_1"/>
<dbReference type="InParanoid" id="C5DGX3"/>
<dbReference type="OMA" id="KYKVCKG"/>
<dbReference type="OrthoDB" id="4039294at2759"/>
<dbReference type="Proteomes" id="UP000002036">
    <property type="component" value="Chromosome D"/>
</dbReference>
<dbReference type="GO" id="GO:0005743">
    <property type="term" value="C:mitochondrial inner membrane"/>
    <property type="evidence" value="ECO:0007669"/>
    <property type="project" value="UniProtKB-SubCell"/>
</dbReference>
<protein>
    <recommendedName>
        <fullName>MICOS complex subunit MIC27</fullName>
    </recommendedName>
</protein>
<gene>
    <name type="primary">MIC27</name>
    <name type="ordered locus">KLTH0D09020g</name>
</gene>
<accession>C5DGX3</accession>
<comment type="function">
    <text evidence="1">Component of the MICOS complex, a large protein complex of the mitochondrial inner membrane that plays crucial roles in the maintenance of crista junctions, inner membrane architecture, and formation of contact sites to the outer membrane.</text>
</comment>
<comment type="subunit">
    <text evidence="1">Component of the mitochondrial contact site and cristae organizing system (MICOS) complex.</text>
</comment>
<comment type="subcellular location">
    <subcellularLocation>
        <location evidence="1">Mitochondrion inner membrane</location>
        <topology evidence="3">Multi-pass membrane protein</topology>
    </subcellularLocation>
</comment>
<comment type="similarity">
    <text evidence="3">Belongs to the apolipoprotein O/MICOS complex subunit Mic27 family.</text>
</comment>
<reference key="1">
    <citation type="journal article" date="2009" name="Genome Res.">
        <title>Comparative genomics of protoploid Saccharomycetaceae.</title>
        <authorList>
            <consortium name="The Genolevures Consortium"/>
            <person name="Souciet J.-L."/>
            <person name="Dujon B."/>
            <person name="Gaillardin C."/>
            <person name="Johnston M."/>
            <person name="Baret P.V."/>
            <person name="Cliften P."/>
            <person name="Sherman D.J."/>
            <person name="Weissenbach J."/>
            <person name="Westhof E."/>
            <person name="Wincker P."/>
            <person name="Jubin C."/>
            <person name="Poulain J."/>
            <person name="Barbe V."/>
            <person name="Segurens B."/>
            <person name="Artiguenave F."/>
            <person name="Anthouard V."/>
            <person name="Vacherie B."/>
            <person name="Val M.-E."/>
            <person name="Fulton R.S."/>
            <person name="Minx P."/>
            <person name="Wilson R."/>
            <person name="Durrens P."/>
            <person name="Jean G."/>
            <person name="Marck C."/>
            <person name="Martin T."/>
            <person name="Nikolski M."/>
            <person name="Rolland T."/>
            <person name="Seret M.-L."/>
            <person name="Casaregola S."/>
            <person name="Despons L."/>
            <person name="Fairhead C."/>
            <person name="Fischer G."/>
            <person name="Lafontaine I."/>
            <person name="Leh V."/>
            <person name="Lemaire M."/>
            <person name="de Montigny J."/>
            <person name="Neuveglise C."/>
            <person name="Thierry A."/>
            <person name="Blanc-Lenfle I."/>
            <person name="Bleykasten C."/>
            <person name="Diffels J."/>
            <person name="Fritsch E."/>
            <person name="Frangeul L."/>
            <person name="Goeffon A."/>
            <person name="Jauniaux N."/>
            <person name="Kachouri-Lafond R."/>
            <person name="Payen C."/>
            <person name="Potier S."/>
            <person name="Pribylova L."/>
            <person name="Ozanne C."/>
            <person name="Richard G.-F."/>
            <person name="Sacerdot C."/>
            <person name="Straub M.-L."/>
            <person name="Talla E."/>
        </authorList>
    </citation>
    <scope>NUCLEOTIDE SEQUENCE [LARGE SCALE GENOMIC DNA]</scope>
    <source>
        <strain>ATCC 56472 / CBS 6340 / NRRL Y-8284</strain>
    </source>
</reference>
<evidence type="ECO:0000250" key="1"/>
<evidence type="ECO:0000255" key="2"/>
<evidence type="ECO:0000305" key="3"/>
<proteinExistence type="inferred from homology"/>
<keyword id="KW-0472">Membrane</keyword>
<keyword id="KW-0496">Mitochondrion</keyword>
<keyword id="KW-0999">Mitochondrion inner membrane</keyword>
<keyword id="KW-1185">Reference proteome</keyword>
<keyword id="KW-0812">Transmembrane</keyword>
<keyword id="KW-1133">Transmembrane helix</keyword>
<feature type="chain" id="PRO_0000399835" description="MICOS complex subunit MIC27">
    <location>
        <begin position="1"/>
        <end position="240"/>
    </location>
</feature>
<feature type="topological domain" description="Mitochondrial intermembrane" evidence="2">
    <location>
        <begin position="1"/>
        <end position="100"/>
    </location>
</feature>
<feature type="transmembrane region" description="Helical" evidence="2">
    <location>
        <begin position="101"/>
        <end position="119"/>
    </location>
</feature>
<feature type="topological domain" description="Mitochondrial matrix" evidence="2">
    <location>
        <begin position="120"/>
        <end position="156"/>
    </location>
</feature>
<feature type="transmembrane region" description="Helical" evidence="2">
    <location>
        <begin position="157"/>
        <end position="176"/>
    </location>
</feature>
<feature type="topological domain" description="Mitochondrial intermembrane" evidence="2">
    <location>
        <begin position="177"/>
        <end position="240"/>
    </location>
</feature>
<name>MIC27_LACTC</name>